<protein>
    <recommendedName>
        <fullName evidence="4">18S rRNA (guanine-N(7))-methyltransferase</fullName>
        <ecNumber evidence="2">2.1.1.-</ecNumber>
    </recommendedName>
    <alternativeName>
        <fullName>Bud site selection protein 23 homolog</fullName>
    </alternativeName>
    <alternativeName>
        <fullName>Williams-Beuren syndrome chromosomal region 22 protein homolog</fullName>
    </alternativeName>
    <alternativeName>
        <fullName evidence="2">rRNA methyltransferase and ribosome maturation factor</fullName>
    </alternativeName>
</protein>
<feature type="chain" id="PRO_0000247014" description="18S rRNA (guanine-N(7))-methyltransferase">
    <location>
        <begin position="1"/>
        <end position="281"/>
    </location>
</feature>
<feature type="region of interest" description="Disordered" evidence="3">
    <location>
        <begin position="256"/>
        <end position="281"/>
    </location>
</feature>
<feature type="sequence conflict" description="In Ref. 2; AAI09890." evidence="4" ref="2">
    <original>F</original>
    <variation>I</variation>
    <location>
        <position position="3"/>
    </location>
</feature>
<feature type="sequence conflict" description="In Ref. 2; AAI09890." evidence="4" ref="2">
    <original>P</original>
    <variation>S</variation>
    <location>
        <position position="85"/>
    </location>
</feature>
<sequence length="281" mass="31687">MAFRGRRPELRGPPELYYDKNEARKYVRNSRMIDVQIKMTGRALELLCVPEDKPCYVLDIGCGTGLSGDYLSDEGHYWVGIDISPAMLDEALDRETQGDVILGDMGQGIPFKPGTFDACISISAVQWLCNANKKSDIPAKRLYCFFSSLYSVLVRGGRAVLQLYPENSEQLELITTQATRAGFTGGVVVDYPNSAKAKKFYLCLFSGPSTSLPEGLSEDTEEEKPAESTFTADRIPYRIARRGVVRKSREWVLEKKARRRRQGKEVCPDTQYTGRKRKPRF</sequence>
<name>BUD23_BOVIN</name>
<accession>Q58DP0</accession>
<accession>Q2TBN2</accession>
<keyword id="KW-0156">Chromatin regulator</keyword>
<keyword id="KW-0963">Cytoplasm</keyword>
<keyword id="KW-0489">Methyltransferase</keyword>
<keyword id="KW-0539">Nucleus</keyword>
<keyword id="KW-1185">Reference proteome</keyword>
<keyword id="KW-0690">Ribosome biogenesis</keyword>
<keyword id="KW-0698">rRNA processing</keyword>
<keyword id="KW-0949">S-adenosyl-L-methionine</keyword>
<keyword id="KW-0804">Transcription</keyword>
<keyword id="KW-0805">Transcription regulation</keyword>
<keyword id="KW-0808">Transferase</keyword>
<keyword id="KW-0832">Ubl conjugation</keyword>
<comment type="function">
    <text evidence="1 2">S-adenosyl-L-methionine-dependent methyltransferase that specifically methylates the N(7) position of a guanine in 18S rRNA. Requires the methyltransferase adapter protein TRM112 for full rRNA methyltransferase activity. Involved in the pre-rRNA processing steps leading to small-subunit rRNA production independently of its RNA-modifying catalytic activity. Important for biogenesis end export of the 40S ribosomal subunit independent on its methyltransferase activity. Locus-specific steroid receptor coactivator. Potentiates transactivation by glucocorticoid (NR3C1), mineralocorticoid (NR3C2), androgen (AR) and progesterone (PGR) receptors. Required for the maintenance of open chromatin at the TSC22D3/GILZ locus to facilitate NR3C1 loading on the response elements. Required for maintenance of dimethylation on histone H3 'Lys-79' (H3K79me2), although direct histone methyltransferase activity is not observed in vitro.</text>
</comment>
<comment type="catalytic activity">
    <reaction evidence="2">
        <text>a guanosine in 18S rRNA + S-adenosyl-L-methionine = an N(7)-methylguanosine in 18S rRNA + S-adenosyl-L-homocysteine</text>
        <dbReference type="Rhea" id="RHEA:54584"/>
        <dbReference type="Rhea" id="RHEA-COMP:13937"/>
        <dbReference type="Rhea" id="RHEA-COMP:13938"/>
        <dbReference type="ChEBI" id="CHEBI:57856"/>
        <dbReference type="ChEBI" id="CHEBI:59789"/>
        <dbReference type="ChEBI" id="CHEBI:74269"/>
        <dbReference type="ChEBI" id="CHEBI:74480"/>
    </reaction>
</comment>
<comment type="subunit">
    <text evidence="2">Heterodimer with TRMT112; this heterodimerization is necessary for the metabolic stability and activity of the catalytic subunit BUD23. Interacts with GRIP1.</text>
</comment>
<comment type="subcellular location">
    <subcellularLocation>
        <location evidence="2">Nucleus</location>
    </subcellularLocation>
    <subcellularLocation>
        <location evidence="2">Nucleus</location>
        <location evidence="2">Nucleoplasm</location>
    </subcellularLocation>
    <subcellularLocation>
        <location evidence="2">Cytoplasm</location>
        <location evidence="2">Perinuclear region</location>
    </subcellularLocation>
    <subcellularLocation>
        <location evidence="2">Cytoplasm</location>
    </subcellularLocation>
    <text evidence="2">Localized diffusely throughout the nucleus and the cytoplasm. Localizes to a polarized perinuclear structure, overlapping partially with the Golgi and lysosomes. Localization is not affected by glucocorticoid treatment.</text>
</comment>
<comment type="PTM">
    <text evidence="2">May be ubiquitinated and targeted to degradation in response to pro-inflammatory cytokine signaling.</text>
</comment>
<comment type="similarity">
    <text evidence="4">Belongs to the class I-like SAM-binding methyltransferase superfamily. BUD23/WBSCR22 family.</text>
</comment>
<reference key="1">
    <citation type="journal article" date="2005" name="BMC Genomics">
        <title>Characterization of 954 bovine full-CDS cDNA sequences.</title>
        <authorList>
            <person name="Harhay G.P."/>
            <person name="Sonstegard T.S."/>
            <person name="Keele J.W."/>
            <person name="Heaton M.P."/>
            <person name="Clawson M.L."/>
            <person name="Snelling W.M."/>
            <person name="Wiedmann R.T."/>
            <person name="Van Tassell C.P."/>
            <person name="Smith T.P.L."/>
        </authorList>
    </citation>
    <scope>NUCLEOTIDE SEQUENCE [LARGE SCALE MRNA]</scope>
</reference>
<reference key="2">
    <citation type="submission" date="2005-11" db="EMBL/GenBank/DDBJ databases">
        <authorList>
            <consortium name="NIH - Mammalian Gene Collection (MGC) project"/>
        </authorList>
    </citation>
    <scope>NUCLEOTIDE SEQUENCE [LARGE SCALE MRNA]</scope>
    <source>
        <strain>Crossbred X Angus</strain>
        <tissue>Liver</tissue>
    </source>
</reference>
<organism>
    <name type="scientific">Bos taurus</name>
    <name type="common">Bovine</name>
    <dbReference type="NCBI Taxonomy" id="9913"/>
    <lineage>
        <taxon>Eukaryota</taxon>
        <taxon>Metazoa</taxon>
        <taxon>Chordata</taxon>
        <taxon>Craniata</taxon>
        <taxon>Vertebrata</taxon>
        <taxon>Euteleostomi</taxon>
        <taxon>Mammalia</taxon>
        <taxon>Eutheria</taxon>
        <taxon>Laurasiatheria</taxon>
        <taxon>Artiodactyla</taxon>
        <taxon>Ruminantia</taxon>
        <taxon>Pecora</taxon>
        <taxon>Bovidae</taxon>
        <taxon>Bovinae</taxon>
        <taxon>Bos</taxon>
    </lineage>
</organism>
<gene>
    <name evidence="2" type="primary">BUD23</name>
    <name type="synonym">WBSCR22</name>
</gene>
<dbReference type="EC" id="2.1.1.-" evidence="2"/>
<dbReference type="EMBL" id="BT021557">
    <property type="protein sequence ID" value="AAX46404.1"/>
    <property type="molecule type" value="mRNA"/>
</dbReference>
<dbReference type="EMBL" id="BC109889">
    <property type="protein sequence ID" value="AAI09890.1"/>
    <property type="molecule type" value="mRNA"/>
</dbReference>
<dbReference type="RefSeq" id="NP_001029629.2">
    <property type="nucleotide sequence ID" value="NM_001034457.2"/>
</dbReference>
<dbReference type="SMR" id="Q58DP0"/>
<dbReference type="FunCoup" id="Q58DP0">
    <property type="interactions" value="3053"/>
</dbReference>
<dbReference type="STRING" id="9913.ENSBTAP00000022697"/>
<dbReference type="PaxDb" id="9913-ENSBTAP00000022697"/>
<dbReference type="GeneID" id="513878"/>
<dbReference type="KEGG" id="bta:513878"/>
<dbReference type="CTD" id="114049"/>
<dbReference type="eggNOG" id="KOG1541">
    <property type="taxonomic scope" value="Eukaryota"/>
</dbReference>
<dbReference type="HOGENOM" id="CLU_055194_0_2_1"/>
<dbReference type="InParanoid" id="Q58DP0"/>
<dbReference type="OrthoDB" id="2877at2759"/>
<dbReference type="TreeFam" id="TF300750"/>
<dbReference type="Proteomes" id="UP000009136">
    <property type="component" value="Unplaced"/>
</dbReference>
<dbReference type="GO" id="GO:0005730">
    <property type="term" value="C:nucleolus"/>
    <property type="evidence" value="ECO:0000318"/>
    <property type="project" value="GO_Central"/>
</dbReference>
<dbReference type="GO" id="GO:0005654">
    <property type="term" value="C:nucleoplasm"/>
    <property type="evidence" value="ECO:0000250"/>
    <property type="project" value="UniProtKB"/>
</dbReference>
<dbReference type="GO" id="GO:0048471">
    <property type="term" value="C:perinuclear region of cytoplasm"/>
    <property type="evidence" value="ECO:0000250"/>
    <property type="project" value="UniProtKB"/>
</dbReference>
<dbReference type="GO" id="GO:0046982">
    <property type="term" value="F:protein heterodimerization activity"/>
    <property type="evidence" value="ECO:0000250"/>
    <property type="project" value="UniProtKB"/>
</dbReference>
<dbReference type="GO" id="GO:0016435">
    <property type="term" value="F:rRNA (guanine) methyltransferase activity"/>
    <property type="evidence" value="ECO:0000250"/>
    <property type="project" value="UniProtKB"/>
</dbReference>
<dbReference type="GO" id="GO:0006325">
    <property type="term" value="P:chromatin organization"/>
    <property type="evidence" value="ECO:0007669"/>
    <property type="project" value="UniProtKB-KW"/>
</dbReference>
<dbReference type="GO" id="GO:2000234">
    <property type="term" value="P:positive regulation of rRNA processing"/>
    <property type="evidence" value="ECO:0000250"/>
    <property type="project" value="UniProtKB"/>
</dbReference>
<dbReference type="GO" id="GO:0070476">
    <property type="term" value="P:rRNA (guanine-N7)-methylation"/>
    <property type="evidence" value="ECO:0000250"/>
    <property type="project" value="UniProtKB"/>
</dbReference>
<dbReference type="CDD" id="cd02440">
    <property type="entry name" value="AdoMet_MTases"/>
    <property type="match status" value="1"/>
</dbReference>
<dbReference type="FunFam" id="3.40.50.150:FF:000017">
    <property type="entry name" value="probable 18S rRNA (Guanine-N(7))-methyltransferase"/>
    <property type="match status" value="1"/>
</dbReference>
<dbReference type="Gene3D" id="3.40.50.150">
    <property type="entry name" value="Vaccinia Virus protein VP39"/>
    <property type="match status" value="1"/>
</dbReference>
<dbReference type="InterPro" id="IPR039769">
    <property type="entry name" value="Bud23-like"/>
</dbReference>
<dbReference type="InterPro" id="IPR022238">
    <property type="entry name" value="Bud23_C"/>
</dbReference>
<dbReference type="InterPro" id="IPR013216">
    <property type="entry name" value="Methyltransf_11"/>
</dbReference>
<dbReference type="InterPro" id="IPR029063">
    <property type="entry name" value="SAM-dependent_MTases_sf"/>
</dbReference>
<dbReference type="PANTHER" id="PTHR12734:SF0">
    <property type="entry name" value="18S RRNA (GUANINE-N(7))-METHYLTRANSFERASE-RELATED"/>
    <property type="match status" value="1"/>
</dbReference>
<dbReference type="PANTHER" id="PTHR12734">
    <property type="entry name" value="METHYLTRANSFERASE-RELATED"/>
    <property type="match status" value="1"/>
</dbReference>
<dbReference type="Pfam" id="PF08241">
    <property type="entry name" value="Methyltransf_11"/>
    <property type="match status" value="1"/>
</dbReference>
<dbReference type="Pfam" id="PF12589">
    <property type="entry name" value="WBS_methylT"/>
    <property type="match status" value="1"/>
</dbReference>
<dbReference type="SUPFAM" id="SSF53335">
    <property type="entry name" value="S-adenosyl-L-methionine-dependent methyltransferases"/>
    <property type="match status" value="1"/>
</dbReference>
<evidence type="ECO:0000250" key="1"/>
<evidence type="ECO:0000250" key="2">
    <source>
        <dbReference type="UniProtKB" id="O43709"/>
    </source>
</evidence>
<evidence type="ECO:0000256" key="3">
    <source>
        <dbReference type="SAM" id="MobiDB-lite"/>
    </source>
</evidence>
<evidence type="ECO:0000305" key="4"/>
<proteinExistence type="evidence at transcript level"/>